<evidence type="ECO:0000269" key="1">
    <source>
    </source>
</evidence>
<evidence type="ECO:0000303" key="2">
    <source>
    </source>
</evidence>
<accession>P85393</accession>
<keyword id="KW-0903">Direct protein sequencing</keyword>
<protein>
    <recommendedName>
        <fullName evidence="2">Uncharacterized protein IMPP3</fullName>
    </recommendedName>
</protein>
<organism>
    <name type="scientific">Nautilus macromphalus</name>
    <name type="common">Bellybutton nautilus</name>
    <dbReference type="NCBI Taxonomy" id="34576"/>
    <lineage>
        <taxon>Eukaryota</taxon>
        <taxon>Metazoa</taxon>
        <taxon>Spiralia</taxon>
        <taxon>Lophotrochozoa</taxon>
        <taxon>Mollusca</taxon>
        <taxon>Cephalopoda</taxon>
        <taxon>Nautiloidea</taxon>
        <taxon>Nautilida</taxon>
        <taxon>Nautilidae</taxon>
        <taxon>Nautilus</taxon>
    </lineage>
</organism>
<name>IMP03_NAUMA</name>
<proteinExistence type="evidence at protein level"/>
<reference key="1">
    <citation type="journal article" date="2009" name="ChemBioChem">
        <title>Evolution of nacre: biochemistry and 'shellomics' of the shell organic matrix of the cephalopod Nautilus macromphalus.</title>
        <authorList>
            <person name="Marie B."/>
            <person name="Marin F."/>
            <person name="Marie A."/>
            <person name="Bedouet L."/>
            <person name="Dubost L."/>
            <person name="Alcaraz G."/>
            <person name="Milet C."/>
            <person name="Luquet G."/>
        </authorList>
    </citation>
    <scope>PROTEIN SEQUENCE</scope>
    <scope>TISSUE SPECIFICITY</scope>
    <source>
        <tissue>Shell</tissue>
    </source>
</reference>
<sequence length="7" mass="882">YLTCNLR</sequence>
<comment type="tissue specificity">
    <text evidence="1">Nacreous layer of shell.</text>
</comment>
<feature type="chain" id="PRO_0000371464" description="Uncharacterized protein IMPP3">
    <location>
        <begin position="1" status="less than"/>
        <end position="7" status="greater than"/>
    </location>
</feature>
<feature type="unsure residue" description="L or I" evidence="1">
    <location>
        <position position="2"/>
    </location>
</feature>
<feature type="unsure residue" description="L or I" evidence="1">
    <location>
        <position position="6"/>
    </location>
</feature>
<feature type="non-terminal residue" evidence="2">
    <location>
        <position position="1"/>
    </location>
</feature>
<feature type="non-terminal residue" evidence="2">
    <location>
        <position position="7"/>
    </location>
</feature>